<sequence>MSKEPIIKLDNIDVTFHQKKREINAVKDVTIHINQGDIYGIVGYSGAGKSTLVRVINLLQEPSAGKITIDNQVIYDNKVTLTSTQLREQRREIGMIFQHFNLMSQLTAEQNVAFALKHSGLSKEAKAAKVAKLLELVGLSDRAQNYPSQLSGGQKQRVAIARALANDPKILISDESTSALDPKTTKQILALLQDLNKKLGLTIVLITHEMQIVKDIANRVAVMQNGKLIEEGSVLDIFSHPRESLTQDFIKIATGIDEAMLKIEQQEVVKNLPVGSKLVQLKYAGHSTDEPLLNQIYKEFEVTANILYGNIEILDGIPVGEMVVILSGDEEKLRQACQAITDSQVQLTLLKEGGKA</sequence>
<reference key="1">
    <citation type="journal article" date="2002" name="Mol. Microbiol.">
        <title>Genome sequence of Streptococcus agalactiae, a pathogen causing invasive neonatal disease.</title>
        <authorList>
            <person name="Glaser P."/>
            <person name="Rusniok C."/>
            <person name="Buchrieser C."/>
            <person name="Chevalier F."/>
            <person name="Frangeul L."/>
            <person name="Msadek T."/>
            <person name="Zouine M."/>
            <person name="Couve E."/>
            <person name="Lalioui L."/>
            <person name="Poyart C."/>
            <person name="Trieu-Cuot P."/>
            <person name="Kunst F."/>
        </authorList>
    </citation>
    <scope>NUCLEOTIDE SEQUENCE [LARGE SCALE GENOMIC DNA]</scope>
    <source>
        <strain>NEM316</strain>
    </source>
</reference>
<name>METN_STRA3</name>
<protein>
    <recommendedName>
        <fullName evidence="1">Methionine import ATP-binding protein MetN</fullName>
        <ecNumber evidence="1">7.4.2.11</ecNumber>
    </recommendedName>
</protein>
<evidence type="ECO:0000255" key="1">
    <source>
        <dbReference type="HAMAP-Rule" id="MF_01719"/>
    </source>
</evidence>
<organism>
    <name type="scientific">Streptococcus agalactiae serotype III (strain NEM316)</name>
    <dbReference type="NCBI Taxonomy" id="211110"/>
    <lineage>
        <taxon>Bacteria</taxon>
        <taxon>Bacillati</taxon>
        <taxon>Bacillota</taxon>
        <taxon>Bacilli</taxon>
        <taxon>Lactobacillales</taxon>
        <taxon>Streptococcaceae</taxon>
        <taxon>Streptococcus</taxon>
    </lineage>
</organism>
<dbReference type="EC" id="7.4.2.11" evidence="1"/>
<dbReference type="EMBL" id="AL766852">
    <property type="protein sequence ID" value="CAD47345.1"/>
    <property type="molecule type" value="Genomic_DNA"/>
</dbReference>
<dbReference type="RefSeq" id="WP_000032384.1">
    <property type="nucleotide sequence ID" value="NC_004368.1"/>
</dbReference>
<dbReference type="SMR" id="Q8E3S0"/>
<dbReference type="KEGG" id="san:gbs1686"/>
<dbReference type="eggNOG" id="COG1135">
    <property type="taxonomic scope" value="Bacteria"/>
</dbReference>
<dbReference type="HOGENOM" id="CLU_000604_1_3_9"/>
<dbReference type="Proteomes" id="UP000000823">
    <property type="component" value="Chromosome"/>
</dbReference>
<dbReference type="GO" id="GO:0005886">
    <property type="term" value="C:plasma membrane"/>
    <property type="evidence" value="ECO:0007669"/>
    <property type="project" value="UniProtKB-SubCell"/>
</dbReference>
<dbReference type="GO" id="GO:0033232">
    <property type="term" value="F:ABC-type D-methionine transporter activity"/>
    <property type="evidence" value="ECO:0007669"/>
    <property type="project" value="UniProtKB-EC"/>
</dbReference>
<dbReference type="GO" id="GO:0005524">
    <property type="term" value="F:ATP binding"/>
    <property type="evidence" value="ECO:0007669"/>
    <property type="project" value="UniProtKB-KW"/>
</dbReference>
<dbReference type="GO" id="GO:0016887">
    <property type="term" value="F:ATP hydrolysis activity"/>
    <property type="evidence" value="ECO:0007669"/>
    <property type="project" value="InterPro"/>
</dbReference>
<dbReference type="CDD" id="cd03258">
    <property type="entry name" value="ABC_MetN_methionine_transporter"/>
    <property type="match status" value="1"/>
</dbReference>
<dbReference type="FunFam" id="3.40.50.300:FF:000056">
    <property type="entry name" value="Cell division ATP-binding protein FtsE"/>
    <property type="match status" value="1"/>
</dbReference>
<dbReference type="Gene3D" id="3.30.70.260">
    <property type="match status" value="1"/>
</dbReference>
<dbReference type="Gene3D" id="3.40.50.300">
    <property type="entry name" value="P-loop containing nucleotide triphosphate hydrolases"/>
    <property type="match status" value="1"/>
</dbReference>
<dbReference type="InterPro" id="IPR003593">
    <property type="entry name" value="AAA+_ATPase"/>
</dbReference>
<dbReference type="InterPro" id="IPR003439">
    <property type="entry name" value="ABC_transporter-like_ATP-bd"/>
</dbReference>
<dbReference type="InterPro" id="IPR017871">
    <property type="entry name" value="ABC_transporter-like_CS"/>
</dbReference>
<dbReference type="InterPro" id="IPR045865">
    <property type="entry name" value="ACT-like_dom_sf"/>
</dbReference>
<dbReference type="InterPro" id="IPR041701">
    <property type="entry name" value="MetN_ABC"/>
</dbReference>
<dbReference type="InterPro" id="IPR050086">
    <property type="entry name" value="MetN_ABC_transporter-like"/>
</dbReference>
<dbReference type="InterPro" id="IPR018449">
    <property type="entry name" value="NIL_domain"/>
</dbReference>
<dbReference type="InterPro" id="IPR027417">
    <property type="entry name" value="P-loop_NTPase"/>
</dbReference>
<dbReference type="PANTHER" id="PTHR43166">
    <property type="entry name" value="AMINO ACID IMPORT ATP-BINDING PROTEIN"/>
    <property type="match status" value="1"/>
</dbReference>
<dbReference type="PANTHER" id="PTHR43166:SF30">
    <property type="entry name" value="METHIONINE IMPORT ATP-BINDING PROTEIN METN"/>
    <property type="match status" value="1"/>
</dbReference>
<dbReference type="Pfam" id="PF00005">
    <property type="entry name" value="ABC_tran"/>
    <property type="match status" value="1"/>
</dbReference>
<dbReference type="Pfam" id="PF09383">
    <property type="entry name" value="NIL"/>
    <property type="match status" value="1"/>
</dbReference>
<dbReference type="SMART" id="SM00382">
    <property type="entry name" value="AAA"/>
    <property type="match status" value="1"/>
</dbReference>
<dbReference type="SMART" id="SM00930">
    <property type="entry name" value="NIL"/>
    <property type="match status" value="1"/>
</dbReference>
<dbReference type="SUPFAM" id="SSF55021">
    <property type="entry name" value="ACT-like"/>
    <property type="match status" value="1"/>
</dbReference>
<dbReference type="SUPFAM" id="SSF52540">
    <property type="entry name" value="P-loop containing nucleoside triphosphate hydrolases"/>
    <property type="match status" value="1"/>
</dbReference>
<dbReference type="PROSITE" id="PS00211">
    <property type="entry name" value="ABC_TRANSPORTER_1"/>
    <property type="match status" value="1"/>
</dbReference>
<dbReference type="PROSITE" id="PS50893">
    <property type="entry name" value="ABC_TRANSPORTER_2"/>
    <property type="match status" value="1"/>
</dbReference>
<dbReference type="PROSITE" id="PS51264">
    <property type="entry name" value="METN"/>
    <property type="match status" value="1"/>
</dbReference>
<gene>
    <name evidence="1" type="primary">metN</name>
    <name type="ordered locus">gbs1686</name>
</gene>
<proteinExistence type="inferred from homology"/>
<keyword id="KW-0029">Amino-acid transport</keyword>
<keyword id="KW-0067">ATP-binding</keyword>
<keyword id="KW-1003">Cell membrane</keyword>
<keyword id="KW-0472">Membrane</keyword>
<keyword id="KW-0547">Nucleotide-binding</keyword>
<keyword id="KW-1278">Translocase</keyword>
<keyword id="KW-0813">Transport</keyword>
<feature type="chain" id="PRO_0000270412" description="Methionine import ATP-binding protein MetN">
    <location>
        <begin position="1"/>
        <end position="356"/>
    </location>
</feature>
<feature type="domain" description="ABC transporter" evidence="1">
    <location>
        <begin position="7"/>
        <end position="250"/>
    </location>
</feature>
<feature type="binding site" evidence="1">
    <location>
        <begin position="43"/>
        <end position="50"/>
    </location>
    <ligand>
        <name>ATP</name>
        <dbReference type="ChEBI" id="CHEBI:30616"/>
    </ligand>
</feature>
<comment type="function">
    <text evidence="1">Part of the ABC transporter complex MetNIQ involved in methionine import. Responsible for energy coupling to the transport system.</text>
</comment>
<comment type="catalytic activity">
    <reaction evidence="1">
        <text>L-methionine(out) + ATP + H2O = L-methionine(in) + ADP + phosphate + H(+)</text>
        <dbReference type="Rhea" id="RHEA:29779"/>
        <dbReference type="ChEBI" id="CHEBI:15377"/>
        <dbReference type="ChEBI" id="CHEBI:15378"/>
        <dbReference type="ChEBI" id="CHEBI:30616"/>
        <dbReference type="ChEBI" id="CHEBI:43474"/>
        <dbReference type="ChEBI" id="CHEBI:57844"/>
        <dbReference type="ChEBI" id="CHEBI:456216"/>
        <dbReference type="EC" id="7.4.2.11"/>
    </reaction>
</comment>
<comment type="catalytic activity">
    <reaction evidence="1">
        <text>D-methionine(out) + ATP + H2O = D-methionine(in) + ADP + phosphate + H(+)</text>
        <dbReference type="Rhea" id="RHEA:29767"/>
        <dbReference type="ChEBI" id="CHEBI:15377"/>
        <dbReference type="ChEBI" id="CHEBI:15378"/>
        <dbReference type="ChEBI" id="CHEBI:30616"/>
        <dbReference type="ChEBI" id="CHEBI:43474"/>
        <dbReference type="ChEBI" id="CHEBI:57932"/>
        <dbReference type="ChEBI" id="CHEBI:456216"/>
        <dbReference type="EC" id="7.4.2.11"/>
    </reaction>
</comment>
<comment type="subunit">
    <text evidence="1">The complex is composed of two ATP-binding proteins (MetN), two transmembrane proteins (MetI) and a solute-binding protein (MetQ).</text>
</comment>
<comment type="subcellular location">
    <subcellularLocation>
        <location evidence="1">Cell membrane</location>
        <topology evidence="1">Peripheral membrane protein</topology>
    </subcellularLocation>
</comment>
<comment type="similarity">
    <text evidence="1">Belongs to the ABC transporter superfamily. Methionine importer (TC 3.A.1.24) family.</text>
</comment>
<accession>Q8E3S0</accession>